<protein>
    <recommendedName>
        <fullName evidence="2">Kelch-like protein diablo</fullName>
    </recommendedName>
</protein>
<gene>
    <name evidence="2" type="primary">dbo</name>
    <name type="ORF">GE22281</name>
</gene>
<organism>
    <name type="scientific">Drosophila yakuba</name>
    <name type="common">Fruit fly</name>
    <dbReference type="NCBI Taxonomy" id="7245"/>
    <lineage>
        <taxon>Eukaryota</taxon>
        <taxon>Metazoa</taxon>
        <taxon>Ecdysozoa</taxon>
        <taxon>Arthropoda</taxon>
        <taxon>Hexapoda</taxon>
        <taxon>Insecta</taxon>
        <taxon>Pterygota</taxon>
        <taxon>Neoptera</taxon>
        <taxon>Endopterygota</taxon>
        <taxon>Diptera</taxon>
        <taxon>Brachycera</taxon>
        <taxon>Muscomorpha</taxon>
        <taxon>Ephydroidea</taxon>
        <taxon>Drosophilidae</taxon>
        <taxon>Drosophila</taxon>
        <taxon>Sophophora</taxon>
    </lineage>
</organism>
<evidence type="ECO:0000250" key="1"/>
<evidence type="ECO:0000250" key="2">
    <source>
        <dbReference type="UniProtKB" id="Q9VUU5"/>
    </source>
</evidence>
<evidence type="ECO:0000250" key="3">
    <source>
        <dbReference type="UniProtKB" id="Q9Y2M5"/>
    </source>
</evidence>
<evidence type="ECO:0000255" key="4"/>
<evidence type="ECO:0000255" key="5">
    <source>
        <dbReference type="PROSITE-ProRule" id="PRU00037"/>
    </source>
</evidence>
<evidence type="ECO:0000256" key="6">
    <source>
        <dbReference type="SAM" id="MobiDB-lite"/>
    </source>
</evidence>
<evidence type="ECO:0000312" key="7">
    <source>
        <dbReference type="EMBL" id="EDW94938.1"/>
    </source>
</evidence>
<keyword id="KW-0009">Actin-binding</keyword>
<keyword id="KW-0880">Kelch repeat</keyword>
<keyword id="KW-0597">Phosphoprotein</keyword>
<keyword id="KW-0677">Repeat</keyword>
<keyword id="KW-0833">Ubl conjugation pathway</keyword>
<name>KLHDB_DROYA</name>
<reference evidence="7" key="1">
    <citation type="journal article" date="2007" name="Nature">
        <title>Evolution of genes and genomes on the Drosophila phylogeny.</title>
        <authorList>
            <consortium name="Drosophila 12 genomes consortium"/>
        </authorList>
    </citation>
    <scope>NUCLEOTIDE SEQUENCE [LARGE SCALE GENOMIC DNA]</scope>
    <source>
        <strain evidence="7">Tai18E2 / Tucson 14021-0261.01</strain>
    </source>
</reference>
<dbReference type="EMBL" id="CM000159">
    <property type="protein sequence ID" value="EDW94938.1"/>
    <property type="molecule type" value="Genomic_DNA"/>
</dbReference>
<dbReference type="SMR" id="B4PD06"/>
<dbReference type="EnsemblMetazoa" id="FBtr0394411">
    <property type="protein sequence ID" value="FBpp0353732"/>
    <property type="gene ID" value="FBgn0239506"/>
</dbReference>
<dbReference type="EnsemblMetazoa" id="XM_015195195.2">
    <property type="protein sequence ID" value="XP_015050681.1"/>
    <property type="gene ID" value="LOC6534549"/>
</dbReference>
<dbReference type="GeneID" id="6534549"/>
<dbReference type="KEGG" id="dya:Dyak_GE22281"/>
<dbReference type="CTD" id="53556"/>
<dbReference type="eggNOG" id="KOG4441">
    <property type="taxonomic scope" value="Eukaryota"/>
</dbReference>
<dbReference type="HOGENOM" id="CLU_004253_14_2_1"/>
<dbReference type="OMA" id="CAVFNNL"/>
<dbReference type="OrthoDB" id="45365at2759"/>
<dbReference type="PhylomeDB" id="B4PD06"/>
<dbReference type="UniPathway" id="UPA00143"/>
<dbReference type="Proteomes" id="UP000002282">
    <property type="component" value="Chromosome 3L"/>
</dbReference>
<dbReference type="GO" id="GO:0031463">
    <property type="term" value="C:Cul3-RING ubiquitin ligase complex"/>
    <property type="evidence" value="ECO:0007669"/>
    <property type="project" value="EnsemblMetazoa"/>
</dbReference>
<dbReference type="GO" id="GO:0003779">
    <property type="term" value="F:actin binding"/>
    <property type="evidence" value="ECO:0007669"/>
    <property type="project" value="UniProtKB-KW"/>
</dbReference>
<dbReference type="GO" id="GO:1990756">
    <property type="term" value="F:ubiquitin-like ligase-substrate adaptor activity"/>
    <property type="evidence" value="ECO:0007669"/>
    <property type="project" value="EnsemblMetazoa"/>
</dbReference>
<dbReference type="GO" id="GO:0045886">
    <property type="term" value="P:negative regulation of synaptic assembly at neuromuscular junction"/>
    <property type="evidence" value="ECO:0000250"/>
    <property type="project" value="UniProtKB"/>
</dbReference>
<dbReference type="GO" id="GO:0043161">
    <property type="term" value="P:proteasome-mediated ubiquitin-dependent protein catabolic process"/>
    <property type="evidence" value="ECO:0007669"/>
    <property type="project" value="EnsemblMetazoa"/>
</dbReference>
<dbReference type="GO" id="GO:0016567">
    <property type="term" value="P:protein ubiquitination"/>
    <property type="evidence" value="ECO:0007669"/>
    <property type="project" value="UniProtKB-UniPathway"/>
</dbReference>
<dbReference type="CDD" id="cd18459">
    <property type="entry name" value="BACK_KLHL20"/>
    <property type="match status" value="1"/>
</dbReference>
<dbReference type="CDD" id="cd18249">
    <property type="entry name" value="BTB_POZ_KLHL20_KLEIP"/>
    <property type="match status" value="1"/>
</dbReference>
<dbReference type="FunFam" id="1.25.40.420:FF:000001">
    <property type="entry name" value="Kelch-like family member 12"/>
    <property type="match status" value="1"/>
</dbReference>
<dbReference type="FunFam" id="2.120.10.80:FF:000006">
    <property type="entry name" value="Kelch-like family member 20"/>
    <property type="match status" value="1"/>
</dbReference>
<dbReference type="FunFam" id="3.30.710.10:FF:000001">
    <property type="entry name" value="Kelch-like family member 20"/>
    <property type="match status" value="1"/>
</dbReference>
<dbReference type="Gene3D" id="1.25.40.420">
    <property type="match status" value="1"/>
</dbReference>
<dbReference type="Gene3D" id="2.120.10.80">
    <property type="entry name" value="Kelch-type beta propeller"/>
    <property type="match status" value="1"/>
</dbReference>
<dbReference type="Gene3D" id="3.30.710.10">
    <property type="entry name" value="Potassium Channel Kv1.1, Chain A"/>
    <property type="match status" value="1"/>
</dbReference>
<dbReference type="InterPro" id="IPR011705">
    <property type="entry name" value="BACK"/>
</dbReference>
<dbReference type="InterPro" id="IPR017096">
    <property type="entry name" value="BTB-kelch_protein"/>
</dbReference>
<dbReference type="InterPro" id="IPR000210">
    <property type="entry name" value="BTB/POZ_dom"/>
</dbReference>
<dbReference type="InterPro" id="IPR011043">
    <property type="entry name" value="Gal_Oxase/kelch_b-propeller"/>
</dbReference>
<dbReference type="InterPro" id="IPR015915">
    <property type="entry name" value="Kelch-typ_b-propeller"/>
</dbReference>
<dbReference type="InterPro" id="IPR006652">
    <property type="entry name" value="Kelch_1"/>
</dbReference>
<dbReference type="InterPro" id="IPR011333">
    <property type="entry name" value="SKP1/BTB/POZ_sf"/>
</dbReference>
<dbReference type="PANTHER" id="PTHR24412">
    <property type="entry name" value="KELCH PROTEIN"/>
    <property type="match status" value="1"/>
</dbReference>
<dbReference type="PANTHER" id="PTHR24412:SF451">
    <property type="entry name" value="KELCH-LIKE PROTEIN 20"/>
    <property type="match status" value="1"/>
</dbReference>
<dbReference type="Pfam" id="PF07707">
    <property type="entry name" value="BACK"/>
    <property type="match status" value="1"/>
</dbReference>
<dbReference type="Pfam" id="PF00651">
    <property type="entry name" value="BTB"/>
    <property type="match status" value="1"/>
</dbReference>
<dbReference type="Pfam" id="PF01344">
    <property type="entry name" value="Kelch_1"/>
    <property type="match status" value="1"/>
</dbReference>
<dbReference type="Pfam" id="PF24681">
    <property type="entry name" value="Kelch_KLHDC2_KLHL20_DRC7"/>
    <property type="match status" value="1"/>
</dbReference>
<dbReference type="PIRSF" id="PIRSF037037">
    <property type="entry name" value="Kelch-like_protein_gigaxonin"/>
    <property type="match status" value="1"/>
</dbReference>
<dbReference type="SMART" id="SM00875">
    <property type="entry name" value="BACK"/>
    <property type="match status" value="1"/>
</dbReference>
<dbReference type="SMART" id="SM00225">
    <property type="entry name" value="BTB"/>
    <property type="match status" value="1"/>
</dbReference>
<dbReference type="SMART" id="SM00612">
    <property type="entry name" value="Kelch"/>
    <property type="match status" value="6"/>
</dbReference>
<dbReference type="SUPFAM" id="SSF50965">
    <property type="entry name" value="Galactose oxidase, central domain"/>
    <property type="match status" value="1"/>
</dbReference>
<dbReference type="SUPFAM" id="SSF117281">
    <property type="entry name" value="Kelch motif"/>
    <property type="match status" value="1"/>
</dbReference>
<dbReference type="SUPFAM" id="SSF54695">
    <property type="entry name" value="POZ domain"/>
    <property type="match status" value="1"/>
</dbReference>
<dbReference type="PROSITE" id="PS50097">
    <property type="entry name" value="BTB"/>
    <property type="match status" value="1"/>
</dbReference>
<sequence length="623" mass="68923">MGDLPGSGSTAQPRDAAVTGTGGNSTAGGGSSVGSTAVDRPPSPARLSHTSEKHPKVTLTELNMLRRHRELCDVVLNVGGRKIFAHRVILSACSSYFCAMFTGELEESRQTEVTIRDIDENAMELLIDFCYTAHIIVEESNVQTLLPAACLLQLVEIQDICCEFLKRQLDPTNCLGIRAFADTHSCRELLRIADKFTQHNFQEVMESEEFLLLPVGQLVDIICSDELNVRSEEQVFNAVMSWLKYNVAERRQHLAQVLQHVRLPLLSPKFLVGTVGSDLLVRSDEACRDLVDEAKNYLLLPQERPLMQGPRTRPRKPTRRGEVLFAVGGWCSGDAIASVERFDPQTNDWKMVAPMSKRRCGVGVAVLNDLLYAVGGHDGQSYLNSIERYDPQTNQWSCDVAPTTSCRTSVGVAVLDGFLYAVGGQDGVQCLNHVERYDPKENKWSKVAPMTTRRLGVAVAVLGGFLYAIGGSDGQCPLNTVERYDPRHNKWVAVSPMSTRRKHLGCAVFNNYIYAVGGRDDCMELSSAERYNPLTNTWSPIVAMTSRRSGVGLAVVNGQLYAVGGFDGSAYLKTIEVYDPETNQWRLCGCMNYRRLGGGVGVMRAPQTENYMWCENSFKQPNS</sequence>
<feature type="chain" id="PRO_0000379956" description="Kelch-like protein diablo">
    <location>
        <begin position="1"/>
        <end position="623"/>
    </location>
</feature>
<feature type="domain" description="BTB" evidence="5">
    <location>
        <begin position="72"/>
        <end position="139"/>
    </location>
</feature>
<feature type="domain" description="BACK" evidence="4">
    <location>
        <begin position="174"/>
        <end position="276"/>
    </location>
</feature>
<feature type="repeat" description="Kelch 1" evidence="4">
    <location>
        <begin position="323"/>
        <end position="369"/>
    </location>
</feature>
<feature type="repeat" description="Kelch 2" evidence="4">
    <location>
        <begin position="371"/>
        <end position="417"/>
    </location>
</feature>
<feature type="repeat" description="Kelch 3" evidence="4">
    <location>
        <begin position="418"/>
        <end position="464"/>
    </location>
</feature>
<feature type="repeat" description="Kelch 4" evidence="4">
    <location>
        <begin position="466"/>
        <end position="511"/>
    </location>
</feature>
<feature type="repeat" description="Kelch 5" evidence="4">
    <location>
        <begin position="513"/>
        <end position="558"/>
    </location>
</feature>
<feature type="repeat" description="Kelch 6" evidence="4">
    <location>
        <begin position="559"/>
        <end position="605"/>
    </location>
</feature>
<feature type="region of interest" description="Disordered" evidence="6">
    <location>
        <begin position="1"/>
        <end position="54"/>
    </location>
</feature>
<feature type="compositionally biased region" description="Gly residues" evidence="6">
    <location>
        <begin position="20"/>
        <end position="32"/>
    </location>
</feature>
<feature type="modified residue" description="Phosphothreonine" evidence="1">
    <location>
        <position position="19"/>
    </location>
</feature>
<proteinExistence type="inferred from homology"/>
<accession>B4PD06</accession>
<comment type="function">
    <text evidence="2 3">Probable substrate-specific adapter of an E3 ubiquitin-protein ligase complex which mediates the ubiquitination and subsequent proteasomal degradation of target proteins. May have a role in synapse differentiation and growth (By similarity).</text>
</comment>
<comment type="pathway">
    <text evidence="3">Protein modification; protein ubiquitination.</text>
</comment>